<gene>
    <name evidence="1" type="primary">rsmA</name>
    <name evidence="1" type="synonym">ksgA</name>
    <name type="ordered locus">HPP12_1403</name>
</gene>
<organism>
    <name type="scientific">Helicobacter pylori (strain P12)</name>
    <dbReference type="NCBI Taxonomy" id="570508"/>
    <lineage>
        <taxon>Bacteria</taxon>
        <taxon>Pseudomonadati</taxon>
        <taxon>Campylobacterota</taxon>
        <taxon>Epsilonproteobacteria</taxon>
        <taxon>Campylobacterales</taxon>
        <taxon>Helicobacteraceae</taxon>
        <taxon>Helicobacter</taxon>
    </lineage>
</organism>
<evidence type="ECO:0000255" key="1">
    <source>
        <dbReference type="HAMAP-Rule" id="MF_00607"/>
    </source>
</evidence>
<sequence length="271" mass="30661">MVVAKKSLGQHFLTDESFLDRIVNALPPLNPLKLIEIGVGLGDLTLKLLDRYPLKTYEIDSNLCEKMRSKLKAQKKPFKLELVEKDALFLKEEEPYFLISNLPYYIATRLVLNALKDPKCRGLLVMTQKEVALKFCTKDSQNALSVLVHTIGNATLLFDVPPSAFSPPPKVFSSVFEVIKEPLKEKALASLTQVPFFEEALQKGFETLEDFLKACFSSPRKTLSNNLKKSVSYREKLDKVLDFLALESQPTSVRASEVKDYLKLLEYLLKG</sequence>
<comment type="function">
    <text evidence="1">Specifically dimethylates two adjacent adenosines (A1518 and A1519) in the loop of a conserved hairpin near the 3'-end of 16S rRNA in the 30S particle. May play a critical role in biogenesis of 30S subunits.</text>
</comment>
<comment type="catalytic activity">
    <reaction evidence="1">
        <text>adenosine(1518)/adenosine(1519) in 16S rRNA + 4 S-adenosyl-L-methionine = N(6)-dimethyladenosine(1518)/N(6)-dimethyladenosine(1519) in 16S rRNA + 4 S-adenosyl-L-homocysteine + 4 H(+)</text>
        <dbReference type="Rhea" id="RHEA:19609"/>
        <dbReference type="Rhea" id="RHEA-COMP:10232"/>
        <dbReference type="Rhea" id="RHEA-COMP:10233"/>
        <dbReference type="ChEBI" id="CHEBI:15378"/>
        <dbReference type="ChEBI" id="CHEBI:57856"/>
        <dbReference type="ChEBI" id="CHEBI:59789"/>
        <dbReference type="ChEBI" id="CHEBI:74411"/>
        <dbReference type="ChEBI" id="CHEBI:74493"/>
        <dbReference type="EC" id="2.1.1.182"/>
    </reaction>
</comment>
<comment type="subcellular location">
    <subcellularLocation>
        <location evidence="1">Cytoplasm</location>
    </subcellularLocation>
</comment>
<comment type="similarity">
    <text evidence="1">Belongs to the class I-like SAM-binding methyltransferase superfamily. rRNA adenine N(6)-methyltransferase family. RsmA subfamily.</text>
</comment>
<proteinExistence type="inferred from homology"/>
<keyword id="KW-0963">Cytoplasm</keyword>
<keyword id="KW-0489">Methyltransferase</keyword>
<keyword id="KW-0694">RNA-binding</keyword>
<keyword id="KW-0698">rRNA processing</keyword>
<keyword id="KW-0949">S-adenosyl-L-methionine</keyword>
<keyword id="KW-0808">Transferase</keyword>
<name>RSMA_HELP2</name>
<protein>
    <recommendedName>
        <fullName evidence="1">Ribosomal RNA small subunit methyltransferase A</fullName>
        <ecNumber evidence="1">2.1.1.182</ecNumber>
    </recommendedName>
    <alternativeName>
        <fullName evidence="1">16S rRNA (adenine(1518)-N(6)/adenine(1519)-N(6))-dimethyltransferase</fullName>
    </alternativeName>
    <alternativeName>
        <fullName evidence="1">16S rRNA dimethyladenosine transferase</fullName>
    </alternativeName>
    <alternativeName>
        <fullName evidence="1">16S rRNA dimethylase</fullName>
    </alternativeName>
    <alternativeName>
        <fullName evidence="1">S-adenosylmethionine-6-N', N'-adenosyl(rRNA) dimethyltransferase</fullName>
    </alternativeName>
</protein>
<accession>B6JNS3</accession>
<reference key="1">
    <citation type="submission" date="2008-10" db="EMBL/GenBank/DDBJ databases">
        <title>The complete genome sequence of Helicobacter pylori strain P12.</title>
        <authorList>
            <person name="Fischer W."/>
            <person name="Windhager L."/>
            <person name="Karnholz A."/>
            <person name="Zeiller M."/>
            <person name="Zimmer R."/>
            <person name="Haas R."/>
        </authorList>
    </citation>
    <scope>NUCLEOTIDE SEQUENCE [LARGE SCALE GENOMIC DNA]</scope>
    <source>
        <strain>P12</strain>
    </source>
</reference>
<feature type="chain" id="PRO_1000130281" description="Ribosomal RNA small subunit methyltransferase A">
    <location>
        <begin position="1"/>
        <end position="271"/>
    </location>
</feature>
<feature type="binding site" evidence="1">
    <location>
        <position position="11"/>
    </location>
    <ligand>
        <name>S-adenosyl-L-methionine</name>
        <dbReference type="ChEBI" id="CHEBI:59789"/>
    </ligand>
</feature>
<feature type="binding site" evidence="1">
    <location>
        <position position="13"/>
    </location>
    <ligand>
        <name>S-adenosyl-L-methionine</name>
        <dbReference type="ChEBI" id="CHEBI:59789"/>
    </ligand>
</feature>
<feature type="binding site" evidence="1">
    <location>
        <position position="38"/>
    </location>
    <ligand>
        <name>S-adenosyl-L-methionine</name>
        <dbReference type="ChEBI" id="CHEBI:59789"/>
    </ligand>
</feature>
<feature type="binding site" evidence="1">
    <location>
        <position position="58"/>
    </location>
    <ligand>
        <name>S-adenosyl-L-methionine</name>
        <dbReference type="ChEBI" id="CHEBI:59789"/>
    </ligand>
</feature>
<feature type="binding site" evidence="1">
    <location>
        <position position="86"/>
    </location>
    <ligand>
        <name>S-adenosyl-L-methionine</name>
        <dbReference type="ChEBI" id="CHEBI:59789"/>
    </ligand>
</feature>
<feature type="binding site" evidence="1">
    <location>
        <position position="101"/>
    </location>
    <ligand>
        <name>S-adenosyl-L-methionine</name>
        <dbReference type="ChEBI" id="CHEBI:59789"/>
    </ligand>
</feature>
<dbReference type="EC" id="2.1.1.182" evidence="1"/>
<dbReference type="EMBL" id="CP001217">
    <property type="protein sequence ID" value="ACJ08551.1"/>
    <property type="molecule type" value="Genomic_DNA"/>
</dbReference>
<dbReference type="SMR" id="B6JNS3"/>
<dbReference type="KEGG" id="hpp:HPP12_1403"/>
<dbReference type="HOGENOM" id="CLU_041220_0_2_7"/>
<dbReference type="Proteomes" id="UP000008198">
    <property type="component" value="Chromosome"/>
</dbReference>
<dbReference type="GO" id="GO:0005829">
    <property type="term" value="C:cytosol"/>
    <property type="evidence" value="ECO:0007669"/>
    <property type="project" value="TreeGrafter"/>
</dbReference>
<dbReference type="GO" id="GO:0052908">
    <property type="term" value="F:16S rRNA (adenine(1518)-N(6)/adenine(1519)-N(6))-dimethyltransferase activity"/>
    <property type="evidence" value="ECO:0007669"/>
    <property type="project" value="UniProtKB-EC"/>
</dbReference>
<dbReference type="GO" id="GO:0003723">
    <property type="term" value="F:RNA binding"/>
    <property type="evidence" value="ECO:0007669"/>
    <property type="project" value="UniProtKB-KW"/>
</dbReference>
<dbReference type="CDD" id="cd02440">
    <property type="entry name" value="AdoMet_MTases"/>
    <property type="match status" value="1"/>
</dbReference>
<dbReference type="FunFam" id="3.40.50.150:FF:000456">
    <property type="entry name" value="Ribosomal RNA small subunit methyltransferase A"/>
    <property type="match status" value="1"/>
</dbReference>
<dbReference type="Gene3D" id="1.10.8.100">
    <property type="entry name" value="Ribosomal RNA adenine dimethylase-like, domain 2"/>
    <property type="match status" value="1"/>
</dbReference>
<dbReference type="Gene3D" id="3.40.50.150">
    <property type="entry name" value="Vaccinia Virus protein VP39"/>
    <property type="match status" value="1"/>
</dbReference>
<dbReference type="HAMAP" id="MF_00607">
    <property type="entry name" value="16SrRNA_methyltr_A"/>
    <property type="match status" value="1"/>
</dbReference>
<dbReference type="InterPro" id="IPR001737">
    <property type="entry name" value="KsgA/Erm"/>
</dbReference>
<dbReference type="InterPro" id="IPR023165">
    <property type="entry name" value="rRNA_Ade_diMease-like_C"/>
</dbReference>
<dbReference type="InterPro" id="IPR020596">
    <property type="entry name" value="rRNA_Ade_Mease_Trfase_CS"/>
</dbReference>
<dbReference type="InterPro" id="IPR020598">
    <property type="entry name" value="rRNA_Ade_methylase_Trfase_N"/>
</dbReference>
<dbReference type="InterPro" id="IPR011530">
    <property type="entry name" value="rRNA_adenine_dimethylase"/>
</dbReference>
<dbReference type="InterPro" id="IPR029063">
    <property type="entry name" value="SAM-dependent_MTases_sf"/>
</dbReference>
<dbReference type="NCBIfam" id="TIGR00755">
    <property type="entry name" value="ksgA"/>
    <property type="match status" value="1"/>
</dbReference>
<dbReference type="PANTHER" id="PTHR11727">
    <property type="entry name" value="DIMETHYLADENOSINE TRANSFERASE"/>
    <property type="match status" value="1"/>
</dbReference>
<dbReference type="PANTHER" id="PTHR11727:SF7">
    <property type="entry name" value="DIMETHYLADENOSINE TRANSFERASE-RELATED"/>
    <property type="match status" value="1"/>
</dbReference>
<dbReference type="Pfam" id="PF00398">
    <property type="entry name" value="RrnaAD"/>
    <property type="match status" value="1"/>
</dbReference>
<dbReference type="SMART" id="SM00650">
    <property type="entry name" value="rADc"/>
    <property type="match status" value="1"/>
</dbReference>
<dbReference type="SUPFAM" id="SSF53335">
    <property type="entry name" value="S-adenosyl-L-methionine-dependent methyltransferases"/>
    <property type="match status" value="1"/>
</dbReference>
<dbReference type="PROSITE" id="PS01131">
    <property type="entry name" value="RRNA_A_DIMETH"/>
    <property type="match status" value="1"/>
</dbReference>
<dbReference type="PROSITE" id="PS51689">
    <property type="entry name" value="SAM_RNA_A_N6_MT"/>
    <property type="match status" value="1"/>
</dbReference>